<gene>
    <name evidence="6 7" type="ORF">AM-28</name>
</gene>
<evidence type="ECO:0000250" key="1">
    <source>
        <dbReference type="UniProtKB" id="P56409"/>
    </source>
</evidence>
<evidence type="ECO:0000250" key="2">
    <source>
        <dbReference type="UniProtKB" id="Q8MVZ2"/>
    </source>
</evidence>
<evidence type="ECO:0000255" key="3"/>
<evidence type="ECO:0000255" key="4">
    <source>
        <dbReference type="PROSITE-ProRule" id="PRU00031"/>
    </source>
</evidence>
<evidence type="ECO:0000269" key="5">
    <source>
    </source>
</evidence>
<evidence type="ECO:0000303" key="6">
    <source>
    </source>
</evidence>
<evidence type="ECO:0000303" key="7">
    <source>
    </source>
</evidence>
<evidence type="ECO:0000305" key="8"/>
<evidence type="ECO:0000305" key="9">
    <source>
    </source>
</evidence>
<evidence type="ECO:0000305" key="10">
    <source>
    </source>
</evidence>
<evidence type="ECO:0000312" key="11">
    <source>
        <dbReference type="EMBL" id="ABI52647.1"/>
    </source>
</evidence>
<feature type="signal peptide" evidence="3">
    <location>
        <begin position="1"/>
        <end position="16"/>
    </location>
</feature>
<feature type="chain" id="PRO_5004167789" description="Monobin" evidence="9">
    <location>
        <begin position="17"/>
        <end position="144"/>
    </location>
</feature>
<feature type="domain" description="BPTI/Kunitz inhibitor 1" evidence="1">
    <location>
        <begin position="18"/>
        <end position="73"/>
    </location>
</feature>
<feature type="domain" description="BPTI/Kunitz inhibitor" evidence="4">
    <location>
        <begin position="86"/>
        <end position="139"/>
    </location>
</feature>
<feature type="region of interest" description="Linker" evidence="1 8">
    <location>
        <begin position="74"/>
        <end position="85"/>
    </location>
</feature>
<feature type="short sequence motif" description="Cell attachment site" evidence="8">
    <location>
        <begin position="92"/>
        <end position="94"/>
    </location>
</feature>
<feature type="modified residue" description="Pyrrolidone carboxylic acid" evidence="9">
    <location>
        <position position="17"/>
    </location>
</feature>
<feature type="disulfide bond" evidence="9">
    <location>
        <begin position="22"/>
        <end position="70"/>
    </location>
</feature>
<feature type="disulfide bond" evidence="9">
    <location>
        <begin position="31"/>
        <end position="53"/>
    </location>
</feature>
<feature type="disulfide bond" evidence="9">
    <location>
        <begin position="47"/>
        <end position="66"/>
    </location>
</feature>
<feature type="disulfide bond" evidence="4 9">
    <location>
        <begin position="86"/>
        <end position="139"/>
    </location>
</feature>
<feature type="disulfide bond" evidence="4 9">
    <location>
        <begin position="95"/>
        <end position="120"/>
    </location>
</feature>
<feature type="disulfide bond" evidence="4 9">
    <location>
        <begin position="112"/>
        <end position="135"/>
    </location>
</feature>
<accession>Q09JW6</accession>
<name>KUNI_ARGMO</name>
<protein>
    <recommendedName>
        <fullName evidence="6 7">Monobin</fullName>
    </recommendedName>
    <alternativeName>
        <fullName evidence="6">Thrombin inhibitor</fullName>
    </alternativeName>
</protein>
<reference evidence="11" key="1">
    <citation type="journal article" date="2008" name="Insect Biochem. Mol. Biol.">
        <title>Characterization of anti-hemostatic factors in the argasid, Argas monolakensis: implications for the evolution of blood-feeding in the soft tick family.</title>
        <authorList>
            <person name="Mans B.J."/>
            <person name="Andersen J.F."/>
            <person name="Schwan T.G."/>
            <person name="Ribeiro J.M."/>
        </authorList>
    </citation>
    <scope>NUCLEOTIDE SEQUENCE [MRNA]</scope>
    <scope>FUNCTION</scope>
    <scope>MASS SPECTROMETRY</scope>
    <scope>IDENTIFICATION BY MASS SPECTROMETRY</scope>
    <scope>PROBABLE PYROGLUTAMATE FORMATION AT GLN-17</scope>
    <scope>PURIFICATION</scope>
    <scope>RECOMBINANT EXPRESSION</scope>
    <source>
        <tissue>Salivary gland</tissue>
    </source>
</reference>
<reference evidence="11" key="2">
    <citation type="journal article" date="2008" name="Insect Biochem. Mol. Biol.">
        <title>Comparative sialomics between hard and soft ticks: implications for the evolution of blood-feeding behavior.</title>
        <authorList>
            <person name="Mans B.J."/>
            <person name="Andersen J.F."/>
            <person name="Francischetti I.M."/>
            <person name="Valenzuela J.G."/>
            <person name="Schwan T.G."/>
            <person name="Pham V.M."/>
            <person name="Garfield M.K."/>
            <person name="Hammer C.H."/>
            <person name="Ribeiro J.M.C."/>
        </authorList>
    </citation>
    <scope>NUCLEOTIDE SEQUENCE [LARGE SCALE MRNA]</scope>
    <source>
        <tissue>Salivary gland</tissue>
    </source>
</reference>
<keyword id="KW-1203">Blood coagulation cascade inhibiting toxin</keyword>
<keyword id="KW-0968">Cytoplasmic vesicle</keyword>
<keyword id="KW-1015">Disulfide bond</keyword>
<keyword id="KW-1199">Hemostasis impairing toxin</keyword>
<keyword id="KW-0646">Protease inhibitor</keyword>
<keyword id="KW-0873">Pyrrolidone carboxylic acid</keyword>
<keyword id="KW-0677">Repeat</keyword>
<keyword id="KW-0964">Secreted</keyword>
<keyword id="KW-0722">Serine protease inhibitor</keyword>
<keyword id="KW-0732">Signal</keyword>
<keyword id="KW-0800">Toxin</keyword>
<comment type="function">
    <text evidence="5">Tick salivary thrombin inhibitor that plays an important part in the anti-hemostatic strategy of ticks.</text>
</comment>
<comment type="subcellular location">
    <subcellularLocation>
        <location evidence="2">Cytoplasmic vesicle</location>
        <location evidence="2">Secretory vesicle</location>
    </subcellularLocation>
    <subcellularLocation>
        <location evidence="9">Secreted</location>
    </subcellularLocation>
</comment>
<comment type="tissue specificity">
    <text evidence="9 10">Expressed in salivary glands.</text>
</comment>
<comment type="PTM">
    <text evidence="5">The N-terminus is blocked.</text>
</comment>
<comment type="mass spectrometry"/>
<dbReference type="EMBL" id="DQ886730">
    <property type="protein sequence ID" value="ABI52647.1"/>
    <property type="molecule type" value="mRNA"/>
</dbReference>
<dbReference type="SMR" id="Q09JW6"/>
<dbReference type="GO" id="GO:0005615">
    <property type="term" value="C:extracellular space"/>
    <property type="evidence" value="ECO:0007669"/>
    <property type="project" value="TreeGrafter"/>
</dbReference>
<dbReference type="GO" id="GO:0030133">
    <property type="term" value="C:transport vesicle"/>
    <property type="evidence" value="ECO:0007669"/>
    <property type="project" value="UniProtKB-SubCell"/>
</dbReference>
<dbReference type="GO" id="GO:0004867">
    <property type="term" value="F:serine-type endopeptidase inhibitor activity"/>
    <property type="evidence" value="ECO:0007669"/>
    <property type="project" value="UniProtKB-KW"/>
</dbReference>
<dbReference type="GO" id="GO:0090729">
    <property type="term" value="F:toxin activity"/>
    <property type="evidence" value="ECO:0007669"/>
    <property type="project" value="UniProtKB-KW"/>
</dbReference>
<dbReference type="GO" id="GO:0044562">
    <property type="term" value="P:envenomation resulting in negative regulation of voltage-gated potassium channel activity in another organism"/>
    <property type="evidence" value="ECO:0007669"/>
    <property type="project" value="UniProtKB-ARBA"/>
</dbReference>
<dbReference type="CDD" id="cd22612">
    <property type="entry name" value="Kunitz_ornithodorin_C-like"/>
    <property type="match status" value="1"/>
</dbReference>
<dbReference type="Gene3D" id="4.10.410.10">
    <property type="entry name" value="Pancreatic trypsin inhibitor Kunitz domain"/>
    <property type="match status" value="2"/>
</dbReference>
<dbReference type="InterPro" id="IPR002223">
    <property type="entry name" value="Kunitz_BPTI"/>
</dbReference>
<dbReference type="InterPro" id="IPR036880">
    <property type="entry name" value="Kunitz_BPTI_sf"/>
</dbReference>
<dbReference type="InterPro" id="IPR050098">
    <property type="entry name" value="TFPI/VKTCI-like"/>
</dbReference>
<dbReference type="PANTHER" id="PTHR10083:SF374">
    <property type="entry name" value="BPTI_KUNITZ INHIBITOR DOMAIN-CONTAINING PROTEIN"/>
    <property type="match status" value="1"/>
</dbReference>
<dbReference type="PANTHER" id="PTHR10083">
    <property type="entry name" value="KUNITZ-TYPE PROTEASE INHIBITOR-RELATED"/>
    <property type="match status" value="1"/>
</dbReference>
<dbReference type="Pfam" id="PF00014">
    <property type="entry name" value="Kunitz_BPTI"/>
    <property type="match status" value="1"/>
</dbReference>
<dbReference type="SMART" id="SM00131">
    <property type="entry name" value="KU"/>
    <property type="match status" value="1"/>
</dbReference>
<dbReference type="SUPFAM" id="SSF57362">
    <property type="entry name" value="BPTI-like"/>
    <property type="match status" value="2"/>
</dbReference>
<dbReference type="PROSITE" id="PS50279">
    <property type="entry name" value="BPTI_KUNITZ_2"/>
    <property type="match status" value="1"/>
</dbReference>
<proteinExistence type="evidence at protein level"/>
<sequence>MRLLALFAFAVAVVSAQRNQMCQQPRTQGSCDASNQITKFFYTGSGCTSAPVCSDTDGGYGTEDECIQACTVQGGHHNEGAGEEGCSGDPPRGDCGGQVEERYYFDSTTRTCQTFEYRGCSSGNPDNSYETEIECEIACPSASS</sequence>
<organism>
    <name type="scientific">Argas monolakensis</name>
    <name type="common">Mono lake bird tick</name>
    <dbReference type="NCBI Taxonomy" id="34602"/>
    <lineage>
        <taxon>Eukaryota</taxon>
        <taxon>Metazoa</taxon>
        <taxon>Ecdysozoa</taxon>
        <taxon>Arthropoda</taxon>
        <taxon>Chelicerata</taxon>
        <taxon>Arachnida</taxon>
        <taxon>Acari</taxon>
        <taxon>Parasitiformes</taxon>
        <taxon>Ixodida</taxon>
        <taxon>Ixodoidea</taxon>
        <taxon>Argasidae</taxon>
        <taxon>Argasinae</taxon>
        <taxon>Argas</taxon>
    </lineage>
</organism>